<accession>Q5HUI4</accession>
<organism>
    <name type="scientific">Campylobacter jejuni (strain RM1221)</name>
    <dbReference type="NCBI Taxonomy" id="195099"/>
    <lineage>
        <taxon>Bacteria</taxon>
        <taxon>Pseudomonadati</taxon>
        <taxon>Campylobacterota</taxon>
        <taxon>Epsilonproteobacteria</taxon>
        <taxon>Campylobacterales</taxon>
        <taxon>Campylobacteraceae</taxon>
        <taxon>Campylobacter</taxon>
    </lineage>
</organism>
<protein>
    <recommendedName>
        <fullName evidence="1">tRNA U34 carboxymethyltransferase</fullName>
        <ecNumber evidence="1">2.5.1.-</ecNumber>
    </recommendedName>
</protein>
<reference key="1">
    <citation type="journal article" date="2005" name="PLoS Biol.">
        <title>Major structural differences and novel potential virulence mechanisms from the genomes of multiple Campylobacter species.</title>
        <authorList>
            <person name="Fouts D.E."/>
            <person name="Mongodin E.F."/>
            <person name="Mandrell R.E."/>
            <person name="Miller W.G."/>
            <person name="Rasko D.A."/>
            <person name="Ravel J."/>
            <person name="Brinkac L.M."/>
            <person name="DeBoy R.T."/>
            <person name="Parker C.T."/>
            <person name="Daugherty S.C."/>
            <person name="Dodson R.J."/>
            <person name="Durkin A.S."/>
            <person name="Madupu R."/>
            <person name="Sullivan S.A."/>
            <person name="Shetty J.U."/>
            <person name="Ayodeji M.A."/>
            <person name="Shvartsbeyn A."/>
            <person name="Schatz M.C."/>
            <person name="Badger J.H."/>
            <person name="Fraser C.M."/>
            <person name="Nelson K.E."/>
        </authorList>
    </citation>
    <scope>NUCLEOTIDE SEQUENCE [LARGE SCALE GENOMIC DNA]</scope>
    <source>
        <strain>RM1221</strain>
    </source>
</reference>
<name>CMOB_CAMJR</name>
<evidence type="ECO:0000255" key="1">
    <source>
        <dbReference type="HAMAP-Rule" id="MF_01590"/>
    </source>
</evidence>
<proteinExistence type="inferred from homology"/>
<comment type="function">
    <text evidence="1">Catalyzes carboxymethyl transfer from carboxy-S-adenosyl-L-methionine (Cx-SAM) to 5-hydroxyuridine (ho5U) to form 5-carboxymethoxyuridine (cmo5U) at position 34 in tRNAs.</text>
</comment>
<comment type="catalytic activity">
    <reaction evidence="1">
        <text>carboxy-S-adenosyl-L-methionine + 5-hydroxyuridine(34) in tRNA = 5-carboxymethoxyuridine(34) in tRNA + S-adenosyl-L-homocysteine + H(+)</text>
        <dbReference type="Rhea" id="RHEA:52848"/>
        <dbReference type="Rhea" id="RHEA-COMP:13381"/>
        <dbReference type="Rhea" id="RHEA-COMP:13383"/>
        <dbReference type="ChEBI" id="CHEBI:15378"/>
        <dbReference type="ChEBI" id="CHEBI:57856"/>
        <dbReference type="ChEBI" id="CHEBI:134278"/>
        <dbReference type="ChEBI" id="CHEBI:136877"/>
        <dbReference type="ChEBI" id="CHEBI:136879"/>
    </reaction>
</comment>
<comment type="subunit">
    <text evidence="1">Homotetramer.</text>
</comment>
<comment type="similarity">
    <text evidence="1">Belongs to the class I-like SAM-binding methyltransferase superfamily. CmoB family.</text>
</comment>
<dbReference type="EC" id="2.5.1.-" evidence="1"/>
<dbReference type="EMBL" id="CP000025">
    <property type="protein sequence ID" value="AAW35386.1"/>
    <property type="molecule type" value="Genomic_DNA"/>
</dbReference>
<dbReference type="SMR" id="Q5HUI4"/>
<dbReference type="KEGG" id="cjr:CJE1058"/>
<dbReference type="HOGENOM" id="CLU_052665_1_0_7"/>
<dbReference type="GO" id="GO:0016765">
    <property type="term" value="F:transferase activity, transferring alkyl or aryl (other than methyl) groups"/>
    <property type="evidence" value="ECO:0007669"/>
    <property type="project" value="InterPro"/>
</dbReference>
<dbReference type="GO" id="GO:0002098">
    <property type="term" value="P:tRNA wobble uridine modification"/>
    <property type="evidence" value="ECO:0007669"/>
    <property type="project" value="InterPro"/>
</dbReference>
<dbReference type="CDD" id="cd02440">
    <property type="entry name" value="AdoMet_MTases"/>
    <property type="match status" value="1"/>
</dbReference>
<dbReference type="Gene3D" id="3.40.50.150">
    <property type="entry name" value="Vaccinia Virus protein VP39"/>
    <property type="match status" value="1"/>
</dbReference>
<dbReference type="HAMAP" id="MF_01590">
    <property type="entry name" value="tRNA_carboxymethyltr_CmoB"/>
    <property type="match status" value="1"/>
</dbReference>
<dbReference type="InterPro" id="IPR010017">
    <property type="entry name" value="CmoB"/>
</dbReference>
<dbReference type="InterPro" id="IPR027555">
    <property type="entry name" value="Mo5U34_MeTrfas-like"/>
</dbReference>
<dbReference type="InterPro" id="IPR029063">
    <property type="entry name" value="SAM-dependent_MTases_sf"/>
</dbReference>
<dbReference type="NCBIfam" id="NF011650">
    <property type="entry name" value="PRK15068.1"/>
    <property type="match status" value="1"/>
</dbReference>
<dbReference type="NCBIfam" id="TIGR00452">
    <property type="entry name" value="tRNA 5-methoxyuridine(34)/uridine 5-oxyacetic acid(34) synthase CmoB"/>
    <property type="match status" value="1"/>
</dbReference>
<dbReference type="PANTHER" id="PTHR43861:SF1">
    <property type="entry name" value="TRANS-ACONITATE 2-METHYLTRANSFERASE"/>
    <property type="match status" value="1"/>
</dbReference>
<dbReference type="PANTHER" id="PTHR43861">
    <property type="entry name" value="TRANS-ACONITATE 2-METHYLTRANSFERASE-RELATED"/>
    <property type="match status" value="1"/>
</dbReference>
<dbReference type="Pfam" id="PF08003">
    <property type="entry name" value="Methyltransf_9"/>
    <property type="match status" value="1"/>
</dbReference>
<dbReference type="SUPFAM" id="SSF53335">
    <property type="entry name" value="S-adenosyl-L-methionine-dependent methyltransferases"/>
    <property type="match status" value="1"/>
</dbReference>
<feature type="chain" id="PRO_0000313906" description="tRNA U34 carboxymethyltransferase">
    <location>
        <begin position="1"/>
        <end position="291"/>
    </location>
</feature>
<feature type="binding site" evidence="1">
    <location>
        <position position="61"/>
    </location>
    <ligand>
        <name>carboxy-S-adenosyl-L-methionine</name>
        <dbReference type="ChEBI" id="CHEBI:134278"/>
    </ligand>
</feature>
<feature type="binding site" evidence="1">
    <location>
        <position position="75"/>
    </location>
    <ligand>
        <name>carboxy-S-adenosyl-L-methionine</name>
        <dbReference type="ChEBI" id="CHEBI:134278"/>
    </ligand>
</feature>
<feature type="binding site" evidence="1">
    <location>
        <position position="80"/>
    </location>
    <ligand>
        <name>carboxy-S-adenosyl-L-methionine</name>
        <dbReference type="ChEBI" id="CHEBI:134278"/>
    </ligand>
</feature>
<feature type="binding site" evidence="1">
    <location>
        <position position="100"/>
    </location>
    <ligand>
        <name>carboxy-S-adenosyl-L-methionine</name>
        <dbReference type="ChEBI" id="CHEBI:134278"/>
    </ligand>
</feature>
<feature type="binding site" evidence="1">
    <location>
        <begin position="122"/>
        <end position="124"/>
    </location>
    <ligand>
        <name>carboxy-S-adenosyl-L-methionine</name>
        <dbReference type="ChEBI" id="CHEBI:134278"/>
    </ligand>
</feature>
<feature type="binding site" evidence="1">
    <location>
        <begin position="149"/>
        <end position="150"/>
    </location>
    <ligand>
        <name>carboxy-S-adenosyl-L-methionine</name>
        <dbReference type="ChEBI" id="CHEBI:134278"/>
    </ligand>
</feature>
<feature type="binding site" evidence="1">
    <location>
        <position position="169"/>
    </location>
    <ligand>
        <name>carboxy-S-adenosyl-L-methionine</name>
        <dbReference type="ChEBI" id="CHEBI:134278"/>
    </ligand>
</feature>
<feature type="binding site" evidence="1">
    <location>
        <position position="284"/>
    </location>
    <ligand>
        <name>carboxy-S-adenosyl-L-methionine</name>
        <dbReference type="ChEBI" id="CHEBI:134278"/>
    </ligand>
</feature>
<sequence length="291" mass="33814">MQENLLEKQFLNHPLYAKIQELKALNLACNFSLDDSVNLSTNSQAKDEILAIAKELKPWRKGPFKIDDLFIDTEWQSFIKFNILKPFMNEISQKCVADIGCNNGYYMFKMLEFNPAKLIGFDPSIKYRLQFELINALAKTPIKYELLGVEDLPSYGLKFDVIFCLGVIYHRSDPIKMLKDLKAGLNKNGVVFLDTMYIEDEREIALVPNKTYSKIPNIYFVPSISALKNWCERAGFKEFEVLATKKTDENEQRKTEWIDSFSLENFLDPKDKNLTIEGYEAPKRVYIRIKI</sequence>
<gene>
    <name evidence="1" type="primary">cmoB</name>
    <name type="ordered locus">CJE1058</name>
</gene>
<keyword id="KW-0808">Transferase</keyword>
<keyword id="KW-0819">tRNA processing</keyword>